<reference key="1">
    <citation type="journal article" date="2001" name="DNA Res.">
        <title>Complete genome sequence of an aerobic thermoacidophilic Crenarchaeon, Sulfolobus tokodaii strain7.</title>
        <authorList>
            <person name="Kawarabayasi Y."/>
            <person name="Hino Y."/>
            <person name="Horikawa H."/>
            <person name="Jin-no K."/>
            <person name="Takahashi M."/>
            <person name="Sekine M."/>
            <person name="Baba S."/>
            <person name="Ankai A."/>
            <person name="Kosugi H."/>
            <person name="Hosoyama A."/>
            <person name="Fukui S."/>
            <person name="Nagai Y."/>
            <person name="Nishijima K."/>
            <person name="Otsuka R."/>
            <person name="Nakazawa H."/>
            <person name="Takamiya M."/>
            <person name="Kato Y."/>
            <person name="Yoshizawa T."/>
            <person name="Tanaka T."/>
            <person name="Kudoh Y."/>
            <person name="Yamazaki J."/>
            <person name="Kushida N."/>
            <person name="Oguchi A."/>
            <person name="Aoki K."/>
            <person name="Masuda S."/>
            <person name="Yanagii M."/>
            <person name="Nishimura M."/>
            <person name="Yamagishi A."/>
            <person name="Oshima T."/>
            <person name="Kikuchi H."/>
        </authorList>
    </citation>
    <scope>NUCLEOTIDE SEQUENCE [LARGE SCALE GENOMIC DNA]</scope>
    <source>
        <strain>DSM 16993 / JCM 10545 / NBRC 100140 / 7</strain>
    </source>
</reference>
<evidence type="ECO:0000250" key="1"/>
<evidence type="ECO:0000255" key="2">
    <source>
        <dbReference type="PROSITE-ProRule" id="PRU00434"/>
    </source>
</evidence>
<evidence type="ECO:0000305" key="3"/>
<keyword id="KW-0067">ATP-binding</keyword>
<keyword id="KW-1003">Cell membrane</keyword>
<keyword id="KW-0472">Membrane</keyword>
<keyword id="KW-0547">Nucleotide-binding</keyword>
<keyword id="KW-1185">Reference proteome</keyword>
<keyword id="KW-0677">Repeat</keyword>
<keyword id="KW-1278">Translocase</keyword>
<keyword id="KW-0813">Transport</keyword>
<feature type="chain" id="PRO_0000092163" description="Putative ABC transporter ATP-binding protein STK_11360">
    <location>
        <begin position="1"/>
        <end position="471"/>
    </location>
</feature>
<feature type="domain" description="ABC transporter 1" evidence="2">
    <location>
        <begin position="4"/>
        <end position="241"/>
    </location>
</feature>
<feature type="domain" description="ABC transporter 2" evidence="2">
    <location>
        <begin position="255"/>
        <end position="470"/>
    </location>
</feature>
<feature type="binding site" evidence="2">
    <location>
        <begin position="37"/>
        <end position="44"/>
    </location>
    <ligand>
        <name>ATP</name>
        <dbReference type="ChEBI" id="CHEBI:30616"/>
        <label>1</label>
    </ligand>
</feature>
<feature type="binding site" evidence="2">
    <location>
        <begin position="286"/>
        <end position="293"/>
    </location>
    <ligand>
        <name>ATP</name>
        <dbReference type="ChEBI" id="CHEBI:30616"/>
        <label>2</label>
    </ligand>
</feature>
<accession>Q972J5</accession>
<sequence length="471" mass="53267">MNFLEIKGLRVFYPESSYSLNVDSLEVKEGETILIAGKSGSGKSTLLNSINGVIPHEIEVEEEGEVKVFGINVRNSTIQQIARFVGTLLQDPDSQIFNYYVIEELAFGAENLNIPREEILYRINKVSQIVGISHLLNKETFRLSGGEKQRVVLGSILIMNPKALILDEPTSSIDLKGTKEILTTLRGLKEKMSMIIAEHKINKVLEFVDRIIILDKGKIIYDIKRDHVKEVDFEDLGLEPLRPSPLPKKRRDGEVILEAKVKVTDGNRTIVDTEIVLRKGISALIGDNGSGKSTLLKALAGILPINLKFYGSIKVEGKEISKLPVEKRGEIIAYLPQEIDLMFTKKTVKEEVSYPAKVRKKYDERVIKELLKRFNLPEDRDPFLLSVGQKRRVAISSLLATGVKVFLLDEPTTGQDWYNRKMLGEELRSIDATFLVVTHDPLFVYYYADRVYKMVNGRVIPISPEDVIKDW</sequence>
<comment type="function">
    <text evidence="1">Probably part of an ABC transporter complex. Responsible for energy coupling to the transport system (By similarity).</text>
</comment>
<comment type="subcellular location">
    <subcellularLocation>
        <location evidence="1">Cell membrane</location>
        <topology evidence="1">Peripheral membrane protein</topology>
    </subcellularLocation>
</comment>
<comment type="similarity">
    <text evidence="3">Belongs to the ABC transporter superfamily.</text>
</comment>
<organism>
    <name type="scientific">Sulfurisphaera tokodaii (strain DSM 16993 / JCM 10545 / NBRC 100140 / 7)</name>
    <name type="common">Sulfolobus tokodaii</name>
    <dbReference type="NCBI Taxonomy" id="273063"/>
    <lineage>
        <taxon>Archaea</taxon>
        <taxon>Thermoproteota</taxon>
        <taxon>Thermoprotei</taxon>
        <taxon>Sulfolobales</taxon>
        <taxon>Sulfolobaceae</taxon>
        <taxon>Sulfurisphaera</taxon>
    </lineage>
</organism>
<protein>
    <recommendedName>
        <fullName>Putative ABC transporter ATP-binding protein STK_11360</fullName>
        <ecNumber>7.-.-.-</ecNumber>
    </recommendedName>
</protein>
<proteinExistence type="inferred from homology"/>
<name>Y1136_SULTO</name>
<dbReference type="EC" id="7.-.-.-"/>
<dbReference type="EMBL" id="BA000023">
    <property type="protein sequence ID" value="BAB66171.1"/>
    <property type="molecule type" value="Genomic_DNA"/>
</dbReference>
<dbReference type="RefSeq" id="WP_010979152.1">
    <property type="nucleotide sequence ID" value="NC_003106.2"/>
</dbReference>
<dbReference type="SMR" id="Q972J5"/>
<dbReference type="STRING" id="273063.STK_11360"/>
<dbReference type="GeneID" id="1459125"/>
<dbReference type="KEGG" id="sto:STK_11360"/>
<dbReference type="PATRIC" id="fig|273063.9.peg.1282"/>
<dbReference type="eggNOG" id="arCOG00188">
    <property type="taxonomic scope" value="Archaea"/>
</dbReference>
<dbReference type="OrthoDB" id="35850at2157"/>
<dbReference type="Proteomes" id="UP000001015">
    <property type="component" value="Chromosome"/>
</dbReference>
<dbReference type="GO" id="GO:0043190">
    <property type="term" value="C:ATP-binding cassette (ABC) transporter complex"/>
    <property type="evidence" value="ECO:0007669"/>
    <property type="project" value="TreeGrafter"/>
</dbReference>
<dbReference type="GO" id="GO:0005524">
    <property type="term" value="F:ATP binding"/>
    <property type="evidence" value="ECO:0007669"/>
    <property type="project" value="UniProtKB-KW"/>
</dbReference>
<dbReference type="GO" id="GO:0016887">
    <property type="term" value="F:ATP hydrolysis activity"/>
    <property type="evidence" value="ECO:0007669"/>
    <property type="project" value="InterPro"/>
</dbReference>
<dbReference type="GO" id="GO:0042626">
    <property type="term" value="F:ATPase-coupled transmembrane transporter activity"/>
    <property type="evidence" value="ECO:0007669"/>
    <property type="project" value="TreeGrafter"/>
</dbReference>
<dbReference type="CDD" id="cd03225">
    <property type="entry name" value="ABC_cobalt_CbiO_domain1"/>
    <property type="match status" value="2"/>
</dbReference>
<dbReference type="Gene3D" id="3.40.50.300">
    <property type="entry name" value="P-loop containing nucleotide triphosphate hydrolases"/>
    <property type="match status" value="2"/>
</dbReference>
<dbReference type="InterPro" id="IPR003593">
    <property type="entry name" value="AAA+_ATPase"/>
</dbReference>
<dbReference type="InterPro" id="IPR003439">
    <property type="entry name" value="ABC_transporter-like_ATP-bd"/>
</dbReference>
<dbReference type="InterPro" id="IPR017871">
    <property type="entry name" value="ABC_transporter-like_CS"/>
</dbReference>
<dbReference type="InterPro" id="IPR015856">
    <property type="entry name" value="ABC_transpr_CbiO/EcfA_su"/>
</dbReference>
<dbReference type="InterPro" id="IPR050095">
    <property type="entry name" value="ECF_ABC_transporter_ATP-bd"/>
</dbReference>
<dbReference type="InterPro" id="IPR027417">
    <property type="entry name" value="P-loop_NTPase"/>
</dbReference>
<dbReference type="PANTHER" id="PTHR43553:SF23">
    <property type="entry name" value="ABC TRANSPORTER ATP-BINDING COMPONENT"/>
    <property type="match status" value="1"/>
</dbReference>
<dbReference type="PANTHER" id="PTHR43553">
    <property type="entry name" value="HEAVY METAL TRANSPORTER"/>
    <property type="match status" value="1"/>
</dbReference>
<dbReference type="Pfam" id="PF00005">
    <property type="entry name" value="ABC_tran"/>
    <property type="match status" value="2"/>
</dbReference>
<dbReference type="SMART" id="SM00382">
    <property type="entry name" value="AAA"/>
    <property type="match status" value="2"/>
</dbReference>
<dbReference type="SUPFAM" id="SSF52540">
    <property type="entry name" value="P-loop containing nucleoside triphosphate hydrolases"/>
    <property type="match status" value="2"/>
</dbReference>
<dbReference type="PROSITE" id="PS00211">
    <property type="entry name" value="ABC_TRANSPORTER_1"/>
    <property type="match status" value="2"/>
</dbReference>
<dbReference type="PROSITE" id="PS50893">
    <property type="entry name" value="ABC_TRANSPORTER_2"/>
    <property type="match status" value="2"/>
</dbReference>
<gene>
    <name type="ordered locus">STK_11360</name>
</gene>